<accession>Q0TCF1</accession>
<sequence>MIQEQTMLNVADNSGARRVMCIKVLGGSHRRYAGVGDIIKITIKEAIPRGKVKKGDVLKPVVVRTNKGVRRPDGSVIRFDGNACVLLNNNSEQPIGTRIFGPVTRELRSEKFMKIISLAPEVL</sequence>
<keyword id="KW-0687">Ribonucleoprotein</keyword>
<keyword id="KW-0689">Ribosomal protein</keyword>
<keyword id="KW-0694">RNA-binding</keyword>
<keyword id="KW-0699">rRNA-binding</keyword>
<name>RL14_ECOL5</name>
<comment type="function">
    <text evidence="1">Binds to 23S rRNA. Forms part of two intersubunit bridges in the 70S ribosome.</text>
</comment>
<comment type="subunit">
    <text evidence="1">Part of the 50S ribosomal subunit. Forms a cluster with proteins L3 and L19. In the 70S ribosome, L14 and L19 interact and together make contacts with the 16S rRNA in bridges B5 and B8.</text>
</comment>
<comment type="similarity">
    <text evidence="1">Belongs to the universal ribosomal protein uL14 family.</text>
</comment>
<organism>
    <name type="scientific">Escherichia coli O6:K15:H31 (strain 536 / UPEC)</name>
    <dbReference type="NCBI Taxonomy" id="362663"/>
    <lineage>
        <taxon>Bacteria</taxon>
        <taxon>Pseudomonadati</taxon>
        <taxon>Pseudomonadota</taxon>
        <taxon>Gammaproteobacteria</taxon>
        <taxon>Enterobacterales</taxon>
        <taxon>Enterobacteriaceae</taxon>
        <taxon>Escherichia</taxon>
    </lineage>
</organism>
<reference key="1">
    <citation type="journal article" date="2006" name="Mol. Microbiol.">
        <title>Role of pathogenicity island-associated integrases in the genome plasticity of uropathogenic Escherichia coli strain 536.</title>
        <authorList>
            <person name="Hochhut B."/>
            <person name="Wilde C."/>
            <person name="Balling G."/>
            <person name="Middendorf B."/>
            <person name="Dobrindt U."/>
            <person name="Brzuszkiewicz E."/>
            <person name="Gottschalk G."/>
            <person name="Carniel E."/>
            <person name="Hacker J."/>
        </authorList>
    </citation>
    <scope>NUCLEOTIDE SEQUENCE [LARGE SCALE GENOMIC DNA]</scope>
    <source>
        <strain>536 / UPEC</strain>
    </source>
</reference>
<gene>
    <name evidence="1" type="primary">rplN</name>
    <name type="ordered locus">ECP_3398</name>
</gene>
<dbReference type="EMBL" id="CP000247">
    <property type="protein sequence ID" value="ABG71378.1"/>
    <property type="molecule type" value="Genomic_DNA"/>
</dbReference>
<dbReference type="RefSeq" id="WP_000613956.1">
    <property type="nucleotide sequence ID" value="NC_008253.1"/>
</dbReference>
<dbReference type="SMR" id="Q0TCF1"/>
<dbReference type="KEGG" id="ecp:ECP_3398"/>
<dbReference type="HOGENOM" id="CLU_095071_2_1_6"/>
<dbReference type="Proteomes" id="UP000009182">
    <property type="component" value="Chromosome"/>
</dbReference>
<dbReference type="GO" id="GO:0022625">
    <property type="term" value="C:cytosolic large ribosomal subunit"/>
    <property type="evidence" value="ECO:0007669"/>
    <property type="project" value="TreeGrafter"/>
</dbReference>
<dbReference type="GO" id="GO:0070180">
    <property type="term" value="F:large ribosomal subunit rRNA binding"/>
    <property type="evidence" value="ECO:0007669"/>
    <property type="project" value="TreeGrafter"/>
</dbReference>
<dbReference type="GO" id="GO:0003735">
    <property type="term" value="F:structural constituent of ribosome"/>
    <property type="evidence" value="ECO:0007669"/>
    <property type="project" value="InterPro"/>
</dbReference>
<dbReference type="GO" id="GO:0006412">
    <property type="term" value="P:translation"/>
    <property type="evidence" value="ECO:0007669"/>
    <property type="project" value="UniProtKB-UniRule"/>
</dbReference>
<dbReference type="CDD" id="cd00337">
    <property type="entry name" value="Ribosomal_uL14"/>
    <property type="match status" value="1"/>
</dbReference>
<dbReference type="FunFam" id="2.40.150.20:FF:000001">
    <property type="entry name" value="50S ribosomal protein L14"/>
    <property type="match status" value="1"/>
</dbReference>
<dbReference type="Gene3D" id="2.40.150.20">
    <property type="entry name" value="Ribosomal protein L14"/>
    <property type="match status" value="1"/>
</dbReference>
<dbReference type="HAMAP" id="MF_01367">
    <property type="entry name" value="Ribosomal_uL14"/>
    <property type="match status" value="1"/>
</dbReference>
<dbReference type="InterPro" id="IPR000218">
    <property type="entry name" value="Ribosomal_uL14"/>
</dbReference>
<dbReference type="InterPro" id="IPR005745">
    <property type="entry name" value="Ribosomal_uL14_bac-type"/>
</dbReference>
<dbReference type="InterPro" id="IPR036853">
    <property type="entry name" value="Ribosomal_uL14_sf"/>
</dbReference>
<dbReference type="NCBIfam" id="TIGR01067">
    <property type="entry name" value="rplN_bact"/>
    <property type="match status" value="1"/>
</dbReference>
<dbReference type="PANTHER" id="PTHR11761">
    <property type="entry name" value="50S/60S RIBOSOMAL PROTEIN L14/L23"/>
    <property type="match status" value="1"/>
</dbReference>
<dbReference type="PANTHER" id="PTHR11761:SF3">
    <property type="entry name" value="LARGE RIBOSOMAL SUBUNIT PROTEIN UL14M"/>
    <property type="match status" value="1"/>
</dbReference>
<dbReference type="Pfam" id="PF00238">
    <property type="entry name" value="Ribosomal_L14"/>
    <property type="match status" value="1"/>
</dbReference>
<dbReference type="SMART" id="SM01374">
    <property type="entry name" value="Ribosomal_L14"/>
    <property type="match status" value="1"/>
</dbReference>
<dbReference type="SUPFAM" id="SSF50193">
    <property type="entry name" value="Ribosomal protein L14"/>
    <property type="match status" value="1"/>
</dbReference>
<protein>
    <recommendedName>
        <fullName evidence="1">Large ribosomal subunit protein uL14</fullName>
    </recommendedName>
    <alternativeName>
        <fullName evidence="2">50S ribosomal protein L14</fullName>
    </alternativeName>
</protein>
<evidence type="ECO:0000255" key="1">
    <source>
        <dbReference type="HAMAP-Rule" id="MF_01367"/>
    </source>
</evidence>
<evidence type="ECO:0000305" key="2"/>
<proteinExistence type="inferred from homology"/>
<feature type="chain" id="PRO_0000266482" description="Large ribosomal subunit protein uL14">
    <location>
        <begin position="1"/>
        <end position="123"/>
    </location>
</feature>